<dbReference type="EC" id="2.1.1.174" evidence="1"/>
<dbReference type="EMBL" id="CP000970">
    <property type="protein sequence ID" value="ACB19975.1"/>
    <property type="molecule type" value="Genomic_DNA"/>
</dbReference>
<dbReference type="RefSeq" id="WP_000018673.1">
    <property type="nucleotide sequence ID" value="NC_010498.1"/>
</dbReference>
<dbReference type="SMR" id="B1LFI2"/>
<dbReference type="KEGG" id="ecm:EcSMS35_3376"/>
<dbReference type="HOGENOM" id="CLU_040288_4_0_6"/>
<dbReference type="Proteomes" id="UP000007011">
    <property type="component" value="Chromosome"/>
</dbReference>
<dbReference type="GO" id="GO:0005737">
    <property type="term" value="C:cytoplasm"/>
    <property type="evidence" value="ECO:0007669"/>
    <property type="project" value="UniProtKB-SubCell"/>
</dbReference>
<dbReference type="GO" id="GO:0052916">
    <property type="term" value="F:23S rRNA (guanine(1835)-N(2))-methyltransferase activity"/>
    <property type="evidence" value="ECO:0007669"/>
    <property type="project" value="UniProtKB-EC"/>
</dbReference>
<dbReference type="GO" id="GO:0003676">
    <property type="term" value="F:nucleic acid binding"/>
    <property type="evidence" value="ECO:0007669"/>
    <property type="project" value="InterPro"/>
</dbReference>
<dbReference type="CDD" id="cd02440">
    <property type="entry name" value="AdoMet_MTases"/>
    <property type="match status" value="1"/>
</dbReference>
<dbReference type="FunFam" id="3.40.50.150:FF:000046">
    <property type="entry name" value="Ribosomal RNA large subunit methyltransferase G"/>
    <property type="match status" value="1"/>
</dbReference>
<dbReference type="FunFam" id="3.40.50.150:FF:000047">
    <property type="entry name" value="Ribosomal RNA large subunit methyltransferase G"/>
    <property type="match status" value="1"/>
</dbReference>
<dbReference type="Gene3D" id="3.40.50.150">
    <property type="entry name" value="Vaccinia Virus protein VP39"/>
    <property type="match status" value="2"/>
</dbReference>
<dbReference type="HAMAP" id="MF_01859">
    <property type="entry name" value="23SrRNA_methyltr_G"/>
    <property type="match status" value="1"/>
</dbReference>
<dbReference type="InterPro" id="IPR002052">
    <property type="entry name" value="DNA_methylase_N6_adenine_CS"/>
</dbReference>
<dbReference type="InterPro" id="IPR017237">
    <property type="entry name" value="rRNA_m2G-MeTrfase_RlmG"/>
</dbReference>
<dbReference type="InterPro" id="IPR046977">
    <property type="entry name" value="RsmC/RlmG"/>
</dbReference>
<dbReference type="InterPro" id="IPR029063">
    <property type="entry name" value="SAM-dependent_MTases_sf"/>
</dbReference>
<dbReference type="InterPro" id="IPR007848">
    <property type="entry name" value="Small_mtfrase_dom"/>
</dbReference>
<dbReference type="NCBIfam" id="NF011577">
    <property type="entry name" value="PRK15001.1"/>
    <property type="match status" value="1"/>
</dbReference>
<dbReference type="PANTHER" id="PTHR47816:SF5">
    <property type="entry name" value="RIBOSOMAL RNA LARGE SUBUNIT METHYLTRANSFERASE G"/>
    <property type="match status" value="1"/>
</dbReference>
<dbReference type="PANTHER" id="PTHR47816">
    <property type="entry name" value="RIBOSOMAL RNA SMALL SUBUNIT METHYLTRANSFERASE C"/>
    <property type="match status" value="1"/>
</dbReference>
<dbReference type="Pfam" id="PF05175">
    <property type="entry name" value="MTS"/>
    <property type="match status" value="1"/>
</dbReference>
<dbReference type="PIRSF" id="PIRSF037565">
    <property type="entry name" value="RRNA_m2G_Mtase_RsmD_prd"/>
    <property type="match status" value="1"/>
</dbReference>
<dbReference type="SUPFAM" id="SSF53335">
    <property type="entry name" value="S-adenosyl-L-methionine-dependent methyltransferases"/>
    <property type="match status" value="1"/>
</dbReference>
<keyword id="KW-0963">Cytoplasm</keyword>
<keyword id="KW-0489">Methyltransferase</keyword>
<keyword id="KW-0698">rRNA processing</keyword>
<keyword id="KW-0949">S-adenosyl-L-methionine</keyword>
<keyword id="KW-0808">Transferase</keyword>
<protein>
    <recommendedName>
        <fullName evidence="1">Ribosomal RNA large subunit methyltransferase G</fullName>
        <ecNumber evidence="1">2.1.1.174</ecNumber>
    </recommendedName>
    <alternativeName>
        <fullName evidence="1">23S rRNA m2G1835 methyltransferase</fullName>
    </alternativeName>
    <alternativeName>
        <fullName evidence="1">rRNA (guanine-N(2)-)-methyltransferase RlmG</fullName>
    </alternativeName>
</protein>
<accession>B1LFI2</accession>
<evidence type="ECO:0000255" key="1">
    <source>
        <dbReference type="HAMAP-Rule" id="MF_01859"/>
    </source>
</evidence>
<reference key="1">
    <citation type="journal article" date="2008" name="J. Bacteriol.">
        <title>Insights into the environmental resistance gene pool from the genome sequence of the multidrug-resistant environmental isolate Escherichia coli SMS-3-5.</title>
        <authorList>
            <person name="Fricke W.F."/>
            <person name="Wright M.S."/>
            <person name="Lindell A.H."/>
            <person name="Harkins D.M."/>
            <person name="Baker-Austin C."/>
            <person name="Ravel J."/>
            <person name="Stepanauskas R."/>
        </authorList>
    </citation>
    <scope>NUCLEOTIDE SEQUENCE [LARGE SCALE GENOMIC DNA]</scope>
    <source>
        <strain>SMS-3-5 / SECEC</strain>
    </source>
</reference>
<sequence>MSHLDNGFRSLTLQRFPATDDVNPLQAWEAADEYLLQQLDDTEIRGPVLILNDAFGALSCALAEHKPYSIGDSYISELATRENLRLNGIDESSVKFLDSTADYPQQPGVVLIKVPKTLALLEQQLRALRKVVTPDTRIIAGAKARDIHTSTLELFEKVLGPTTTTLAWKKARLINCTFNEPPLVDAPQTVSWKLEGTDWTIHNHANVFSRTGLDIGARFFMQHLPENLEGEIVDLGCGNGVIGLTLLDKNPQAKVVFVDESPMAVASSRLNVETNMPEALDRCEFMINNALSGVEPFRFNAVLCNPPFHQQHALTDNVAWEMFHHARRCLKINGELYIVANRHLDYFHKLKKIFGNCTTIATNNKFVVLKAVKLGRRR</sequence>
<comment type="function">
    <text evidence="1">Specifically methylates the guanine in position 1835 (m2G1835) of 23S rRNA.</text>
</comment>
<comment type="catalytic activity">
    <reaction evidence="1">
        <text>guanosine(1835) in 23S rRNA + S-adenosyl-L-methionine = N(2)-methylguanosine(1835) in 23S rRNA + S-adenosyl-L-homocysteine + H(+)</text>
        <dbReference type="Rhea" id="RHEA:42744"/>
        <dbReference type="Rhea" id="RHEA-COMP:10217"/>
        <dbReference type="Rhea" id="RHEA-COMP:10218"/>
        <dbReference type="ChEBI" id="CHEBI:15378"/>
        <dbReference type="ChEBI" id="CHEBI:57856"/>
        <dbReference type="ChEBI" id="CHEBI:59789"/>
        <dbReference type="ChEBI" id="CHEBI:74269"/>
        <dbReference type="ChEBI" id="CHEBI:74481"/>
        <dbReference type="EC" id="2.1.1.174"/>
    </reaction>
</comment>
<comment type="subcellular location">
    <subcellularLocation>
        <location evidence="1">Cytoplasm</location>
    </subcellularLocation>
</comment>
<comment type="similarity">
    <text evidence="1">Belongs to the methyltransferase superfamily. RlmG family.</text>
</comment>
<gene>
    <name evidence="1" type="primary">rlmG</name>
    <name type="ordered locus">EcSMS35_3376</name>
</gene>
<feature type="chain" id="PRO_0000366457" description="Ribosomal RNA large subunit methyltransferase G">
    <location>
        <begin position="1"/>
        <end position="378"/>
    </location>
</feature>
<organism>
    <name type="scientific">Escherichia coli (strain SMS-3-5 / SECEC)</name>
    <dbReference type="NCBI Taxonomy" id="439855"/>
    <lineage>
        <taxon>Bacteria</taxon>
        <taxon>Pseudomonadati</taxon>
        <taxon>Pseudomonadota</taxon>
        <taxon>Gammaproteobacteria</taxon>
        <taxon>Enterobacterales</taxon>
        <taxon>Enterobacteriaceae</taxon>
        <taxon>Escherichia</taxon>
    </lineage>
</organism>
<name>RLMG_ECOSM</name>
<proteinExistence type="inferred from homology"/>